<proteinExistence type="inferred from homology"/>
<protein>
    <recommendedName>
        <fullName evidence="1">Glutamate-1-semialdehyde 2,1-aminomutase</fullName>
        <shortName evidence="1">GSA</shortName>
        <ecNumber evidence="1">5.4.3.8</ecNumber>
    </recommendedName>
    <alternativeName>
        <fullName evidence="1">Glutamate-1-semialdehyde aminotransferase</fullName>
        <shortName evidence="1">GSA-AT</shortName>
    </alternativeName>
</protein>
<name>GSA_THERP</name>
<comment type="catalytic activity">
    <reaction evidence="1">
        <text>(S)-4-amino-5-oxopentanoate = 5-aminolevulinate</text>
        <dbReference type="Rhea" id="RHEA:14265"/>
        <dbReference type="ChEBI" id="CHEBI:57501"/>
        <dbReference type="ChEBI" id="CHEBI:356416"/>
        <dbReference type="EC" id="5.4.3.8"/>
    </reaction>
</comment>
<comment type="cofactor">
    <cofactor evidence="1">
        <name>pyridoxal 5'-phosphate</name>
        <dbReference type="ChEBI" id="CHEBI:597326"/>
    </cofactor>
</comment>
<comment type="pathway">
    <text evidence="1">Porphyrin-containing compound metabolism; protoporphyrin-IX biosynthesis; 5-aminolevulinate from L-glutamyl-tRNA(Glu): step 2/2.</text>
</comment>
<comment type="subunit">
    <text evidence="1">Homodimer.</text>
</comment>
<comment type="subcellular location">
    <subcellularLocation>
        <location evidence="1">Cytoplasm</location>
    </subcellularLocation>
</comment>
<comment type="similarity">
    <text evidence="1">Belongs to the class-III pyridoxal-phosphate-dependent aminotransferase family. HemL subfamily.</text>
</comment>
<feature type="chain" id="PRO_1000201036" description="Glutamate-1-semialdehyde 2,1-aminomutase">
    <location>
        <begin position="1"/>
        <end position="430"/>
    </location>
</feature>
<feature type="modified residue" description="N6-(pyridoxal phosphate)lysine" evidence="1">
    <location>
        <position position="267"/>
    </location>
</feature>
<dbReference type="EC" id="5.4.3.8" evidence="1"/>
<dbReference type="EMBL" id="CP001275">
    <property type="protein sequence ID" value="ACM05709.1"/>
    <property type="molecule type" value="Genomic_DNA"/>
</dbReference>
<dbReference type="SMR" id="B9L0Q2"/>
<dbReference type="STRING" id="309801.trd_1123"/>
<dbReference type="KEGG" id="tro:trd_1123"/>
<dbReference type="eggNOG" id="COG0001">
    <property type="taxonomic scope" value="Bacteria"/>
</dbReference>
<dbReference type="HOGENOM" id="CLU_016922_1_5_0"/>
<dbReference type="OrthoDB" id="9807885at2"/>
<dbReference type="UniPathway" id="UPA00251">
    <property type="reaction ID" value="UER00317"/>
</dbReference>
<dbReference type="Proteomes" id="UP000000447">
    <property type="component" value="Chromosome"/>
</dbReference>
<dbReference type="GO" id="GO:0005737">
    <property type="term" value="C:cytoplasm"/>
    <property type="evidence" value="ECO:0007669"/>
    <property type="project" value="UniProtKB-SubCell"/>
</dbReference>
<dbReference type="GO" id="GO:0042286">
    <property type="term" value="F:glutamate-1-semialdehyde 2,1-aminomutase activity"/>
    <property type="evidence" value="ECO:0007669"/>
    <property type="project" value="UniProtKB-UniRule"/>
</dbReference>
<dbReference type="GO" id="GO:0030170">
    <property type="term" value="F:pyridoxal phosphate binding"/>
    <property type="evidence" value="ECO:0007669"/>
    <property type="project" value="InterPro"/>
</dbReference>
<dbReference type="GO" id="GO:0008483">
    <property type="term" value="F:transaminase activity"/>
    <property type="evidence" value="ECO:0007669"/>
    <property type="project" value="InterPro"/>
</dbReference>
<dbReference type="GO" id="GO:0006782">
    <property type="term" value="P:protoporphyrinogen IX biosynthetic process"/>
    <property type="evidence" value="ECO:0007669"/>
    <property type="project" value="UniProtKB-UniRule"/>
</dbReference>
<dbReference type="CDD" id="cd00610">
    <property type="entry name" value="OAT_like"/>
    <property type="match status" value="1"/>
</dbReference>
<dbReference type="FunFam" id="3.40.640.10:FF:000021">
    <property type="entry name" value="Glutamate-1-semialdehyde 2,1-aminomutase"/>
    <property type="match status" value="1"/>
</dbReference>
<dbReference type="Gene3D" id="3.90.1150.10">
    <property type="entry name" value="Aspartate Aminotransferase, domain 1"/>
    <property type="match status" value="1"/>
</dbReference>
<dbReference type="Gene3D" id="3.40.640.10">
    <property type="entry name" value="Type I PLP-dependent aspartate aminotransferase-like (Major domain)"/>
    <property type="match status" value="1"/>
</dbReference>
<dbReference type="HAMAP" id="MF_00375">
    <property type="entry name" value="HemL_aminotrans_3"/>
    <property type="match status" value="1"/>
</dbReference>
<dbReference type="InterPro" id="IPR004639">
    <property type="entry name" value="4pyrrol_synth_GluAld_NH2Trfase"/>
</dbReference>
<dbReference type="InterPro" id="IPR005814">
    <property type="entry name" value="Aminotrans_3"/>
</dbReference>
<dbReference type="InterPro" id="IPR049704">
    <property type="entry name" value="Aminotrans_3_PPA_site"/>
</dbReference>
<dbReference type="InterPro" id="IPR015424">
    <property type="entry name" value="PyrdxlP-dep_Trfase"/>
</dbReference>
<dbReference type="InterPro" id="IPR015421">
    <property type="entry name" value="PyrdxlP-dep_Trfase_major"/>
</dbReference>
<dbReference type="InterPro" id="IPR015422">
    <property type="entry name" value="PyrdxlP-dep_Trfase_small"/>
</dbReference>
<dbReference type="NCBIfam" id="TIGR00713">
    <property type="entry name" value="hemL"/>
    <property type="match status" value="1"/>
</dbReference>
<dbReference type="NCBIfam" id="NF000818">
    <property type="entry name" value="PRK00062.1"/>
    <property type="match status" value="1"/>
</dbReference>
<dbReference type="PANTHER" id="PTHR43713">
    <property type="entry name" value="GLUTAMATE-1-SEMIALDEHYDE 2,1-AMINOMUTASE"/>
    <property type="match status" value="1"/>
</dbReference>
<dbReference type="PANTHER" id="PTHR43713:SF3">
    <property type="entry name" value="GLUTAMATE-1-SEMIALDEHYDE 2,1-AMINOMUTASE 1, CHLOROPLASTIC-RELATED"/>
    <property type="match status" value="1"/>
</dbReference>
<dbReference type="Pfam" id="PF00202">
    <property type="entry name" value="Aminotran_3"/>
    <property type="match status" value="1"/>
</dbReference>
<dbReference type="SUPFAM" id="SSF53383">
    <property type="entry name" value="PLP-dependent transferases"/>
    <property type="match status" value="1"/>
</dbReference>
<dbReference type="PROSITE" id="PS00600">
    <property type="entry name" value="AA_TRANSFER_CLASS_3"/>
    <property type="match status" value="1"/>
</dbReference>
<gene>
    <name evidence="1" type="primary">hemL</name>
    <name type="ordered locus">trd_1123</name>
</gene>
<keyword id="KW-0963">Cytoplasm</keyword>
<keyword id="KW-0413">Isomerase</keyword>
<keyword id="KW-0627">Porphyrin biosynthesis</keyword>
<keyword id="KW-0663">Pyridoxal phosphate</keyword>
<keyword id="KW-1185">Reference proteome</keyword>
<evidence type="ECO:0000255" key="1">
    <source>
        <dbReference type="HAMAP-Rule" id="MF_00375"/>
    </source>
</evidence>
<sequence length="430" mass="45749">MMMENSGSLWDAARQFFPGGVNSPVRAFRAVGEEPVVAVRGEGAYLIDADGRRFLDYICSWGALLAGHAHPHVVDRLSEAIQRGTSFGLLSPYEVELARAIVASVPAIELVRFVNSGTEATMSAIRLARAVTGRNLVVKFAGCYHGHVDGLLVAAGSGVLTFGLPGTPGVTEGTARDTLVLPYNDQEAVEDAFAQHGERIAAVIVEPVAGNMGVVPPAAGFLSRLRELTRQAGALLIFDEVITGFRLGLGGAQERFGILPDLTCLGKVIGGGLPVGAYGGRRDLMEQVAPNGPVYQAGTLAGNPLSMVAGLATLELAREPGVYGRLETLAAWLQRGLEETIQESGLPAHVQRVGSMLTLFFSQQPVTDAQTAERCDTARFAAFHRAMRAQGILLPPSQFEAWFVSLAHREEDIDRTIEAARKALAEVARG</sequence>
<organism>
    <name type="scientific">Thermomicrobium roseum (strain ATCC 27502 / DSM 5159 / P-2)</name>
    <dbReference type="NCBI Taxonomy" id="309801"/>
    <lineage>
        <taxon>Bacteria</taxon>
        <taxon>Pseudomonadati</taxon>
        <taxon>Thermomicrobiota</taxon>
        <taxon>Thermomicrobia</taxon>
        <taxon>Thermomicrobiales</taxon>
        <taxon>Thermomicrobiaceae</taxon>
        <taxon>Thermomicrobium</taxon>
    </lineage>
</organism>
<reference key="1">
    <citation type="journal article" date="2009" name="PLoS ONE">
        <title>Complete genome sequence of the aerobic CO-oxidizing thermophile Thermomicrobium roseum.</title>
        <authorList>
            <person name="Wu D."/>
            <person name="Raymond J."/>
            <person name="Wu M."/>
            <person name="Chatterji S."/>
            <person name="Ren Q."/>
            <person name="Graham J.E."/>
            <person name="Bryant D.A."/>
            <person name="Robb F."/>
            <person name="Colman A."/>
            <person name="Tallon L.J."/>
            <person name="Badger J.H."/>
            <person name="Madupu R."/>
            <person name="Ward N.L."/>
            <person name="Eisen J.A."/>
        </authorList>
    </citation>
    <scope>NUCLEOTIDE SEQUENCE [LARGE SCALE GENOMIC DNA]</scope>
    <source>
        <strain>ATCC 27502 / DSM 5159 / P-2</strain>
    </source>
</reference>
<accession>B9L0Q2</accession>